<proteinExistence type="inferred from homology"/>
<feature type="chain" id="PRO_1000129612" description="Co-chaperonin GroES">
    <location>
        <begin position="1"/>
        <end position="96"/>
    </location>
</feature>
<reference key="1">
    <citation type="journal article" date="2008" name="J. Bacteriol.">
        <title>Comparative genome sequence analysis of multidrug-resistant Acinetobacter baumannii.</title>
        <authorList>
            <person name="Adams M.D."/>
            <person name="Goglin K."/>
            <person name="Molyneaux N."/>
            <person name="Hujer K.M."/>
            <person name="Lavender H."/>
            <person name="Jamison J.J."/>
            <person name="MacDonald I.J."/>
            <person name="Martin K.M."/>
            <person name="Russo T."/>
            <person name="Campagnari A.A."/>
            <person name="Hujer A.M."/>
            <person name="Bonomo R.A."/>
            <person name="Gill S.R."/>
        </authorList>
    </citation>
    <scope>NUCLEOTIDE SEQUENCE [LARGE SCALE GENOMIC DNA]</scope>
    <source>
        <strain>AB0057</strain>
    </source>
</reference>
<protein>
    <recommendedName>
        <fullName evidence="1">Co-chaperonin GroES</fullName>
    </recommendedName>
    <alternativeName>
        <fullName evidence="1">10 kDa chaperonin</fullName>
    </alternativeName>
    <alternativeName>
        <fullName evidence="1">Chaperonin-10</fullName>
        <shortName evidence="1">Cpn10</shortName>
    </alternativeName>
</protein>
<evidence type="ECO:0000255" key="1">
    <source>
        <dbReference type="HAMAP-Rule" id="MF_00580"/>
    </source>
</evidence>
<name>CH10_ACIB5</name>
<dbReference type="EMBL" id="CP001182">
    <property type="protein sequence ID" value="ACJ42412.1"/>
    <property type="molecule type" value="Genomic_DNA"/>
</dbReference>
<dbReference type="RefSeq" id="WP_000065579.1">
    <property type="nucleotide sequence ID" value="NC_011586.2"/>
</dbReference>
<dbReference type="SMR" id="B7I619"/>
<dbReference type="KEGG" id="abn:AB57_3080"/>
<dbReference type="HOGENOM" id="CLU_132825_2_0_6"/>
<dbReference type="Proteomes" id="UP000007094">
    <property type="component" value="Chromosome"/>
</dbReference>
<dbReference type="GO" id="GO:0005737">
    <property type="term" value="C:cytoplasm"/>
    <property type="evidence" value="ECO:0007669"/>
    <property type="project" value="UniProtKB-SubCell"/>
</dbReference>
<dbReference type="GO" id="GO:0005524">
    <property type="term" value="F:ATP binding"/>
    <property type="evidence" value="ECO:0007669"/>
    <property type="project" value="InterPro"/>
</dbReference>
<dbReference type="GO" id="GO:0046872">
    <property type="term" value="F:metal ion binding"/>
    <property type="evidence" value="ECO:0007669"/>
    <property type="project" value="TreeGrafter"/>
</dbReference>
<dbReference type="GO" id="GO:0044183">
    <property type="term" value="F:protein folding chaperone"/>
    <property type="evidence" value="ECO:0007669"/>
    <property type="project" value="InterPro"/>
</dbReference>
<dbReference type="GO" id="GO:0051087">
    <property type="term" value="F:protein-folding chaperone binding"/>
    <property type="evidence" value="ECO:0007669"/>
    <property type="project" value="TreeGrafter"/>
</dbReference>
<dbReference type="GO" id="GO:0051082">
    <property type="term" value="F:unfolded protein binding"/>
    <property type="evidence" value="ECO:0007669"/>
    <property type="project" value="TreeGrafter"/>
</dbReference>
<dbReference type="GO" id="GO:0051085">
    <property type="term" value="P:chaperone cofactor-dependent protein refolding"/>
    <property type="evidence" value="ECO:0007669"/>
    <property type="project" value="TreeGrafter"/>
</dbReference>
<dbReference type="CDD" id="cd00320">
    <property type="entry name" value="cpn10"/>
    <property type="match status" value="1"/>
</dbReference>
<dbReference type="FunFam" id="2.30.33.40:FF:000001">
    <property type="entry name" value="10 kDa chaperonin"/>
    <property type="match status" value="1"/>
</dbReference>
<dbReference type="Gene3D" id="2.30.33.40">
    <property type="entry name" value="GroES chaperonin"/>
    <property type="match status" value="1"/>
</dbReference>
<dbReference type="HAMAP" id="MF_00580">
    <property type="entry name" value="CH10"/>
    <property type="match status" value="1"/>
</dbReference>
<dbReference type="InterPro" id="IPR020818">
    <property type="entry name" value="Chaperonin_GroES"/>
</dbReference>
<dbReference type="InterPro" id="IPR037124">
    <property type="entry name" value="Chaperonin_GroES_sf"/>
</dbReference>
<dbReference type="InterPro" id="IPR018369">
    <property type="entry name" value="Chaprnonin_Cpn10_CS"/>
</dbReference>
<dbReference type="InterPro" id="IPR011032">
    <property type="entry name" value="GroES-like_sf"/>
</dbReference>
<dbReference type="NCBIfam" id="NF001527">
    <property type="entry name" value="PRK00364.1-2"/>
    <property type="match status" value="1"/>
</dbReference>
<dbReference type="NCBIfam" id="NF001529">
    <property type="entry name" value="PRK00364.1-5"/>
    <property type="match status" value="1"/>
</dbReference>
<dbReference type="NCBIfam" id="NF001531">
    <property type="entry name" value="PRK00364.2-2"/>
    <property type="match status" value="1"/>
</dbReference>
<dbReference type="NCBIfam" id="NF001533">
    <property type="entry name" value="PRK00364.2-4"/>
    <property type="match status" value="1"/>
</dbReference>
<dbReference type="PANTHER" id="PTHR10772">
    <property type="entry name" value="10 KDA HEAT SHOCK PROTEIN"/>
    <property type="match status" value="1"/>
</dbReference>
<dbReference type="PANTHER" id="PTHR10772:SF58">
    <property type="entry name" value="CO-CHAPERONIN GROES"/>
    <property type="match status" value="1"/>
</dbReference>
<dbReference type="Pfam" id="PF00166">
    <property type="entry name" value="Cpn10"/>
    <property type="match status" value="1"/>
</dbReference>
<dbReference type="PRINTS" id="PR00297">
    <property type="entry name" value="CHAPERONIN10"/>
</dbReference>
<dbReference type="SMART" id="SM00883">
    <property type="entry name" value="Cpn10"/>
    <property type="match status" value="1"/>
</dbReference>
<dbReference type="SUPFAM" id="SSF50129">
    <property type="entry name" value="GroES-like"/>
    <property type="match status" value="1"/>
</dbReference>
<dbReference type="PROSITE" id="PS00681">
    <property type="entry name" value="CHAPERONINS_CPN10"/>
    <property type="match status" value="1"/>
</dbReference>
<keyword id="KW-0143">Chaperone</keyword>
<keyword id="KW-0963">Cytoplasm</keyword>
<sequence length="96" mass="10157">MSNIRPLHDRVVIRRVEEETKTAGGILLPGSAAEKPSQGEVIAVGNGQITDNGVRALDVKVGDKVLFGTYAGTTVKVNGEELLIMKESDILAVLEG</sequence>
<gene>
    <name evidence="1" type="primary">groES</name>
    <name evidence="1" type="synonym">groS</name>
    <name type="ordered locus">AB57_3080</name>
</gene>
<comment type="function">
    <text evidence="1">Together with the chaperonin GroEL, plays an essential role in assisting protein folding. The GroEL-GroES system forms a nano-cage that allows encapsulation of the non-native substrate proteins and provides a physical environment optimized to promote and accelerate protein folding. GroES binds to the apical surface of the GroEL ring, thereby capping the opening of the GroEL channel.</text>
</comment>
<comment type="subunit">
    <text evidence="1">Heptamer of 7 subunits arranged in a ring. Interacts with the chaperonin GroEL.</text>
</comment>
<comment type="subcellular location">
    <subcellularLocation>
        <location evidence="1">Cytoplasm</location>
    </subcellularLocation>
</comment>
<comment type="similarity">
    <text evidence="1">Belongs to the GroES chaperonin family.</text>
</comment>
<organism>
    <name type="scientific">Acinetobacter baumannii (strain AB0057)</name>
    <dbReference type="NCBI Taxonomy" id="480119"/>
    <lineage>
        <taxon>Bacteria</taxon>
        <taxon>Pseudomonadati</taxon>
        <taxon>Pseudomonadota</taxon>
        <taxon>Gammaproteobacteria</taxon>
        <taxon>Moraxellales</taxon>
        <taxon>Moraxellaceae</taxon>
        <taxon>Acinetobacter</taxon>
        <taxon>Acinetobacter calcoaceticus/baumannii complex</taxon>
    </lineage>
</organism>
<accession>B7I619</accession>